<comment type="function">
    <text evidence="1">Transcription factor which regulates nonfermentable carbon utilization. Activator of gluconeogenetic genes (By similarity).</text>
</comment>
<comment type="subcellular location">
    <subcellularLocation>
        <location evidence="2">Nucleus</location>
    </subcellularLocation>
</comment>
<comment type="similarity">
    <text evidence="4">Belongs to the ERT1/acuK family.</text>
</comment>
<comment type="sequence caution" evidence="4">
    <conflict type="erroneous gene model prediction">
        <sequence resource="EMBL-CDS" id="EAL87674"/>
    </conflict>
</comment>
<accession>Q4WHD1</accession>
<evidence type="ECO:0000250" key="1"/>
<evidence type="ECO:0000255" key="2">
    <source>
        <dbReference type="PROSITE-ProRule" id="PRU00227"/>
    </source>
</evidence>
<evidence type="ECO:0000256" key="3">
    <source>
        <dbReference type="SAM" id="MobiDB-lite"/>
    </source>
</evidence>
<evidence type="ECO:0000305" key="4"/>
<dbReference type="EMBL" id="AAHF01000008">
    <property type="protein sequence ID" value="EAL87674.1"/>
    <property type="status" value="ALT_SEQ"/>
    <property type="molecule type" value="Genomic_DNA"/>
</dbReference>
<dbReference type="RefSeq" id="XP_749712.1">
    <property type="nucleotide sequence ID" value="XM_744619.1"/>
</dbReference>
<dbReference type="SMR" id="Q4WHD1"/>
<dbReference type="FunCoup" id="Q4WHD1">
    <property type="interactions" value="222"/>
</dbReference>
<dbReference type="STRING" id="330879.Q4WHD1"/>
<dbReference type="KEGG" id="afm:AFUA_2G05830"/>
<dbReference type="eggNOG" id="ENOG502R1M5">
    <property type="taxonomic scope" value="Eukaryota"/>
</dbReference>
<dbReference type="HOGENOM" id="CLU_010748_1_0_1"/>
<dbReference type="InParanoid" id="Q4WHD1"/>
<dbReference type="OrthoDB" id="2538135at2759"/>
<dbReference type="Proteomes" id="UP000002530">
    <property type="component" value="Chromosome 2"/>
</dbReference>
<dbReference type="GO" id="GO:0005634">
    <property type="term" value="C:nucleus"/>
    <property type="evidence" value="ECO:0000318"/>
    <property type="project" value="GO_Central"/>
</dbReference>
<dbReference type="GO" id="GO:0003700">
    <property type="term" value="F:DNA-binding transcription factor activity"/>
    <property type="evidence" value="ECO:0000318"/>
    <property type="project" value="GO_Central"/>
</dbReference>
<dbReference type="GO" id="GO:0000981">
    <property type="term" value="F:DNA-binding transcription factor activity, RNA polymerase II-specific"/>
    <property type="evidence" value="ECO:0007669"/>
    <property type="project" value="InterPro"/>
</dbReference>
<dbReference type="GO" id="GO:0000977">
    <property type="term" value="F:RNA polymerase II transcription regulatory region sequence-specific DNA binding"/>
    <property type="evidence" value="ECO:0000318"/>
    <property type="project" value="GO_Central"/>
</dbReference>
<dbReference type="GO" id="GO:0008270">
    <property type="term" value="F:zinc ion binding"/>
    <property type="evidence" value="ECO:0007669"/>
    <property type="project" value="InterPro"/>
</dbReference>
<dbReference type="GO" id="GO:0009267">
    <property type="term" value="P:cellular response to starvation"/>
    <property type="evidence" value="ECO:0000318"/>
    <property type="project" value="GO_Central"/>
</dbReference>
<dbReference type="GO" id="GO:0006094">
    <property type="term" value="P:gluconeogenesis"/>
    <property type="evidence" value="ECO:0007669"/>
    <property type="project" value="UniProtKB-KW"/>
</dbReference>
<dbReference type="CDD" id="cd00067">
    <property type="entry name" value="GAL4"/>
    <property type="match status" value="1"/>
</dbReference>
<dbReference type="Gene3D" id="4.10.240.10">
    <property type="entry name" value="Zn(2)-C6 fungal-type DNA-binding domain"/>
    <property type="match status" value="1"/>
</dbReference>
<dbReference type="InterPro" id="IPR050335">
    <property type="entry name" value="ERT1_acuK_gluconeogen_tf"/>
</dbReference>
<dbReference type="InterPro" id="IPR056751">
    <property type="entry name" value="PAS_13"/>
</dbReference>
<dbReference type="InterPro" id="IPR036864">
    <property type="entry name" value="Zn2-C6_fun-type_DNA-bd_sf"/>
</dbReference>
<dbReference type="InterPro" id="IPR001138">
    <property type="entry name" value="Zn2Cys6_DnaBD"/>
</dbReference>
<dbReference type="PANTHER" id="PTHR47659:SF1">
    <property type="entry name" value="TRANSCRIPTION ACTIVATOR OF GLUCONEOGENESIS ERT1"/>
    <property type="match status" value="1"/>
</dbReference>
<dbReference type="PANTHER" id="PTHR47659">
    <property type="entry name" value="ZN(II)2CYS6 TRANSCRIPTION FACTOR (EUROFUNG)-RELATED"/>
    <property type="match status" value="1"/>
</dbReference>
<dbReference type="Pfam" id="PF24990">
    <property type="entry name" value="PAS_13"/>
    <property type="match status" value="1"/>
</dbReference>
<dbReference type="SMART" id="SM00066">
    <property type="entry name" value="GAL4"/>
    <property type="match status" value="1"/>
</dbReference>
<dbReference type="SUPFAM" id="SSF57701">
    <property type="entry name" value="Zn2/Cys6 DNA-binding domain"/>
    <property type="match status" value="1"/>
</dbReference>
<dbReference type="PROSITE" id="PS50048">
    <property type="entry name" value="ZN2_CY6_FUNGAL_2"/>
    <property type="match status" value="1"/>
</dbReference>
<sequence>MKTEVNGSAPALAGDHGGVDQDTPDAGDRTEQAKHKTNGATENAPKSANAKDPSRPRRKKARRACFACQRAHLTCGDERPCQRCIKRGLQDACHDGVRKKAKYLHDAPDGALMPGVGGNFYNNAMRNNMPLSRNGTTTVNTTTQQNSGSNYYPTPQSNSYNVYQDTPLTQNSFPSQSPVSPTFNMKTTPTARSNSLSSSVNQQPPSTTVSGATQSQNPFAGPFFDPSDPALFNFDLSSMNFENRYGALEFGMLGHMATGAGDSPTDSATQRGSIGRSGSTQYSTTPLTGAPGFGESPGNQQPFLFGNDPLLNEWPNSQAPNQGHLNVSGVYPQGGMMHMAKSDAPHAFAIESGPASFSSPSATTSPHINSGHDESSLSNAAVNKSTGLTANGQRPAITTPSLKHQSLQFGVKRRQRNPSTVYESVKEPYAYTNRFHNLTAFIQRRFSPQKTLQIAKALASIRPSFIATTKTLNRDDLIFMEKCFQRTLWEYEDFINACGTPTIVCRRTGEIAAVGKEFSILTGWKKDVLLGKEPNLNVNTGGSSAPGSGNTSRGSFTPRSSTLETATPGRPQPVFLAELLDDDSVVEFYEDFARLAFGDSRGSVMTTCKLLKYKTKEDMELAQSDDNQRWNNHLRKGGIAGEAGMNQLGFKDGKVECAYCWTVKRDVFDIPMLIVMNFLPCI</sequence>
<organism>
    <name type="scientific">Aspergillus fumigatus (strain ATCC MYA-4609 / CBS 101355 / FGSC A1100 / Af293)</name>
    <name type="common">Neosartorya fumigata</name>
    <dbReference type="NCBI Taxonomy" id="330879"/>
    <lineage>
        <taxon>Eukaryota</taxon>
        <taxon>Fungi</taxon>
        <taxon>Dikarya</taxon>
        <taxon>Ascomycota</taxon>
        <taxon>Pezizomycotina</taxon>
        <taxon>Eurotiomycetes</taxon>
        <taxon>Eurotiomycetidae</taxon>
        <taxon>Eurotiales</taxon>
        <taxon>Aspergillaceae</taxon>
        <taxon>Aspergillus</taxon>
        <taxon>Aspergillus subgen. Fumigati</taxon>
    </lineage>
</organism>
<protein>
    <recommendedName>
        <fullName>Transcription activator of gluconeogenesis acuK</fullName>
    </recommendedName>
</protein>
<keyword id="KW-0010">Activator</keyword>
<keyword id="KW-0238">DNA-binding</keyword>
<keyword id="KW-0312">Gluconeogenesis</keyword>
<keyword id="KW-0479">Metal-binding</keyword>
<keyword id="KW-0539">Nucleus</keyword>
<keyword id="KW-1185">Reference proteome</keyword>
<keyword id="KW-0804">Transcription</keyword>
<keyword id="KW-0805">Transcription regulation</keyword>
<keyword id="KW-0862">Zinc</keyword>
<reference key="1">
    <citation type="journal article" date="2005" name="Nature">
        <title>Genomic sequence of the pathogenic and allergenic filamentous fungus Aspergillus fumigatus.</title>
        <authorList>
            <person name="Nierman W.C."/>
            <person name="Pain A."/>
            <person name="Anderson M.J."/>
            <person name="Wortman J.R."/>
            <person name="Kim H.S."/>
            <person name="Arroyo J."/>
            <person name="Berriman M."/>
            <person name="Abe K."/>
            <person name="Archer D.B."/>
            <person name="Bermejo C."/>
            <person name="Bennett J.W."/>
            <person name="Bowyer P."/>
            <person name="Chen D."/>
            <person name="Collins M."/>
            <person name="Coulsen R."/>
            <person name="Davies R."/>
            <person name="Dyer P.S."/>
            <person name="Farman M.L."/>
            <person name="Fedorova N."/>
            <person name="Fedorova N.D."/>
            <person name="Feldblyum T.V."/>
            <person name="Fischer R."/>
            <person name="Fosker N."/>
            <person name="Fraser A."/>
            <person name="Garcia J.L."/>
            <person name="Garcia M.J."/>
            <person name="Goble A."/>
            <person name="Goldman G.H."/>
            <person name="Gomi K."/>
            <person name="Griffith-Jones S."/>
            <person name="Gwilliam R."/>
            <person name="Haas B.J."/>
            <person name="Haas H."/>
            <person name="Harris D.E."/>
            <person name="Horiuchi H."/>
            <person name="Huang J."/>
            <person name="Humphray S."/>
            <person name="Jimenez J."/>
            <person name="Keller N."/>
            <person name="Khouri H."/>
            <person name="Kitamoto K."/>
            <person name="Kobayashi T."/>
            <person name="Konzack S."/>
            <person name="Kulkarni R."/>
            <person name="Kumagai T."/>
            <person name="Lafton A."/>
            <person name="Latge J.-P."/>
            <person name="Li W."/>
            <person name="Lord A."/>
            <person name="Lu C."/>
            <person name="Majoros W.H."/>
            <person name="May G.S."/>
            <person name="Miller B.L."/>
            <person name="Mohamoud Y."/>
            <person name="Molina M."/>
            <person name="Monod M."/>
            <person name="Mouyna I."/>
            <person name="Mulligan S."/>
            <person name="Murphy L.D."/>
            <person name="O'Neil S."/>
            <person name="Paulsen I."/>
            <person name="Penalva M.A."/>
            <person name="Pertea M."/>
            <person name="Price C."/>
            <person name="Pritchard B.L."/>
            <person name="Quail M.A."/>
            <person name="Rabbinowitsch E."/>
            <person name="Rawlins N."/>
            <person name="Rajandream M.A."/>
            <person name="Reichard U."/>
            <person name="Renauld H."/>
            <person name="Robson G.D."/>
            <person name="Rodriguez de Cordoba S."/>
            <person name="Rodriguez-Pena J.M."/>
            <person name="Ronning C.M."/>
            <person name="Rutter S."/>
            <person name="Salzberg S.L."/>
            <person name="Sanchez M."/>
            <person name="Sanchez-Ferrero J.C."/>
            <person name="Saunders D."/>
            <person name="Seeger K."/>
            <person name="Squares R."/>
            <person name="Squares S."/>
            <person name="Takeuchi M."/>
            <person name="Tekaia F."/>
            <person name="Turner G."/>
            <person name="Vazquez de Aldana C.R."/>
            <person name="Weidman J."/>
            <person name="White O."/>
            <person name="Woodward J.R."/>
            <person name="Yu J.-H."/>
            <person name="Fraser C.M."/>
            <person name="Galagan J.E."/>
            <person name="Asai K."/>
            <person name="Machida M."/>
            <person name="Hall N."/>
            <person name="Barrell B.G."/>
            <person name="Denning D.W."/>
        </authorList>
    </citation>
    <scope>NUCLEOTIDE SEQUENCE [LARGE SCALE GENOMIC DNA]</scope>
    <source>
        <strain>ATCC MYA-4609 / CBS 101355 / FGSC A1100 / Af293</strain>
    </source>
</reference>
<name>ACUK_ASPFU</name>
<gene>
    <name type="primary">acuK</name>
    <name type="ORF">AN7468</name>
</gene>
<feature type="chain" id="PRO_0000406432" description="Transcription activator of gluconeogenesis acuK">
    <location>
        <begin position="1"/>
        <end position="682"/>
    </location>
</feature>
<feature type="DNA-binding region" description="Zn(2)-C6 fungal-type" evidence="2">
    <location>
        <begin position="65"/>
        <end position="93"/>
    </location>
</feature>
<feature type="region of interest" description="Disordered" evidence="3">
    <location>
        <begin position="1"/>
        <end position="58"/>
    </location>
</feature>
<feature type="region of interest" description="Disordered" evidence="3">
    <location>
        <begin position="131"/>
        <end position="224"/>
    </location>
</feature>
<feature type="region of interest" description="Disordered" evidence="3">
    <location>
        <begin position="261"/>
        <end position="328"/>
    </location>
</feature>
<feature type="region of interest" description="Disordered" evidence="3">
    <location>
        <begin position="351"/>
        <end position="418"/>
    </location>
</feature>
<feature type="region of interest" description="Disordered" evidence="3">
    <location>
        <begin position="537"/>
        <end position="569"/>
    </location>
</feature>
<feature type="compositionally biased region" description="Low complexity" evidence="3">
    <location>
        <begin position="134"/>
        <end position="150"/>
    </location>
</feature>
<feature type="compositionally biased region" description="Polar residues" evidence="3">
    <location>
        <begin position="151"/>
        <end position="218"/>
    </location>
</feature>
<feature type="compositionally biased region" description="Polar residues" evidence="3">
    <location>
        <begin position="264"/>
        <end position="287"/>
    </location>
</feature>
<feature type="compositionally biased region" description="Polar residues" evidence="3">
    <location>
        <begin position="314"/>
        <end position="325"/>
    </location>
</feature>
<feature type="compositionally biased region" description="Low complexity" evidence="3">
    <location>
        <begin position="352"/>
        <end position="366"/>
    </location>
</feature>
<feature type="compositionally biased region" description="Polar residues" evidence="3">
    <location>
        <begin position="376"/>
        <end position="408"/>
    </location>
</feature>
<feature type="compositionally biased region" description="Polar residues" evidence="3">
    <location>
        <begin position="537"/>
        <end position="565"/>
    </location>
</feature>
<proteinExistence type="inferred from homology"/>